<feature type="chain" id="PRO_0000099130" description="Scaffold protein D13 ortholog">
    <location>
        <begin position="1"/>
        <end position="551"/>
    </location>
</feature>
<proteinExistence type="inferred from homology"/>
<comment type="function">
    <text evidence="1">Scaffold protein which forms a transitory spherical honeycomb lattice providing curvature and rigidity to the convex membrane of crescent and immature virions (IV). This association occurs concomitantly with viral membrane formation. Targeted by the drug rifampicin, which prevents the formation of this lattice, and hence virus morphogenesis. In the presence of rifampicin, irregularly shaped membranes that lack the honeycomb layer accumulate around areas of electron-dense viroplasm. This layer is lost from virions during maturation from IV to mature virion (MV), through the proteolysis of A17 N-terminus (By similarity).</text>
</comment>
<comment type="subunit">
    <text evidence="1">Homotrimer (By similarity). Self-assembles to form a layer. Interacts with A17 (via N-terminus); this interaction is necessary for D13 association with membranes (By similarity).</text>
</comment>
<comment type="subcellular location">
    <subcellularLocation>
        <location>Membrane</location>
        <topology>Peripheral membrane protein</topology>
    </subcellularLocation>
    <text evidence="1">Associates transitorily with crescent and IV membranes.</text>
</comment>
<comment type="miscellaneous">
    <text>Displays structure similarities to capsid proteins.</text>
</comment>
<comment type="similarity">
    <text evidence="2">Belongs to the poxviridae protein D13 family.</text>
</comment>
<sequence>MNNTVINSIIGNDDIVKRHNVFGVDVQNPTLYMPQYITINGITSTDSNCDQHVVSTFEIRDQYITALSHVMLSIELPEVKGVGRFGYVPYVGYLCIQHVSISSYDDILWESSGEDLYNSCLDNDTALTNSGYSHELNTISTGLTPNDTIKESTTVYVYIKTPFDVEKTFSSLKLADTKIVITVTFNPVSDIIIRDITFNYDNFVKDFVYVTELSCIGYMVKNIQIKPSYIERPRRVFGQLNQSTAVISDVHSVSSLSVYIKPYYGNADNKFISYPGYSQSEKDYICVFVERLLDDLVTVCDTSPKWFPETAELVEVPNSGIVTIQDVDIFVRIDNVPCNMKVYFHTNILVFGTRKNSVTYNLSKKFTTITGTYSESTNRIMFSHVSHSINITDVSIPVSVWTCQRNIYNGDNRSESSKNKDLFINDPFIKGIDFKNKTDIISRLEVRFGNDVLYSETSPISKVYNDLLSNHKCGMRTLRFNFTPPTFFKPTTIVANPSRGKDKLSVRVVFTSLDPNNPIYYISKQLVLVCKDLYKVTNDDGINVTKIIGEL</sequence>
<accession>Q08517</accession>
<keyword id="KW-0472">Membrane</keyword>
<reference key="1">
    <citation type="journal article" date="1993" name="Virology">
        <title>DNA sequence analysis of conserved and unique regions of swinepox virus: identification of genetic elements supporting phenotypic observations including a novel G protein-coupled receptor homologue.</title>
        <authorList>
            <person name="Massung R.F."/>
            <person name="Jayarama V."/>
            <person name="Moyer R.W."/>
        </authorList>
    </citation>
    <scope>NUCLEOTIDE SEQUENCE [GENOMIC DNA]</scope>
</reference>
<organismHost>
    <name type="scientific">Sus scrofa</name>
    <name type="common">Pig</name>
    <dbReference type="NCBI Taxonomy" id="9823"/>
</organismHost>
<dbReference type="EMBL" id="L22012">
    <property type="protein sequence ID" value="AAA16176.1"/>
    <property type="molecule type" value="Unassigned_DNA"/>
</dbReference>
<dbReference type="SMR" id="Q08517"/>
<dbReference type="GO" id="GO:0016020">
    <property type="term" value="C:membrane"/>
    <property type="evidence" value="ECO:0007669"/>
    <property type="project" value="UniProtKB-SubCell"/>
</dbReference>
<dbReference type="GO" id="GO:0046677">
    <property type="term" value="P:response to antibiotic"/>
    <property type="evidence" value="ECO:0007669"/>
    <property type="project" value="InterPro"/>
</dbReference>
<dbReference type="InterPro" id="IPR005008">
    <property type="entry name" value="Poxvirus_Rif-R"/>
</dbReference>
<dbReference type="Pfam" id="PF03340">
    <property type="entry name" value="Pox_Rif"/>
    <property type="match status" value="1"/>
</dbReference>
<name>D13_SWPVK</name>
<protein>
    <recommendedName>
        <fullName>Scaffold protein D13 ortholog</fullName>
    </recommendedName>
    <alternativeName>
        <fullName>62 kDa protein</fullName>
    </alternativeName>
    <alternativeName>
        <fullName>Rifampicin resistance protein</fullName>
    </alternativeName>
</protein>
<organism>
    <name type="scientific">Swinepox virus (strain Kasza)</name>
    <name type="common">SWPV</name>
    <dbReference type="NCBI Taxonomy" id="10277"/>
    <lineage>
        <taxon>Viruses</taxon>
        <taxon>Varidnaviria</taxon>
        <taxon>Bamfordvirae</taxon>
        <taxon>Nucleocytoviricota</taxon>
        <taxon>Pokkesviricetes</taxon>
        <taxon>Chitovirales</taxon>
        <taxon>Poxviridae</taxon>
        <taxon>Chordopoxvirinae</taxon>
        <taxon>Suipoxvirus</taxon>
        <taxon>Swinepox virus</taxon>
    </lineage>
</organism>
<evidence type="ECO:0000250" key="1"/>
<evidence type="ECO:0000305" key="2"/>